<proteinExistence type="inferred from homology"/>
<name>DNLJ_BACTN</name>
<feature type="chain" id="PRO_0000313132" description="DNA ligase">
    <location>
        <begin position="1"/>
        <end position="666"/>
    </location>
</feature>
<feature type="domain" description="BRCT" evidence="1">
    <location>
        <begin position="588"/>
        <end position="666"/>
    </location>
</feature>
<feature type="active site" description="N6-AMP-lysine intermediate" evidence="1">
    <location>
        <position position="112"/>
    </location>
</feature>
<feature type="binding site" evidence="1">
    <location>
        <begin position="31"/>
        <end position="35"/>
    </location>
    <ligand>
        <name>NAD(+)</name>
        <dbReference type="ChEBI" id="CHEBI:57540"/>
    </ligand>
</feature>
<feature type="binding site" evidence="1">
    <location>
        <begin position="80"/>
        <end position="81"/>
    </location>
    <ligand>
        <name>NAD(+)</name>
        <dbReference type="ChEBI" id="CHEBI:57540"/>
    </ligand>
</feature>
<feature type="binding site" evidence="1">
    <location>
        <position position="110"/>
    </location>
    <ligand>
        <name>NAD(+)</name>
        <dbReference type="ChEBI" id="CHEBI:57540"/>
    </ligand>
</feature>
<feature type="binding site" evidence="1">
    <location>
        <position position="133"/>
    </location>
    <ligand>
        <name>NAD(+)</name>
        <dbReference type="ChEBI" id="CHEBI:57540"/>
    </ligand>
</feature>
<feature type="binding site" evidence="1">
    <location>
        <position position="170"/>
    </location>
    <ligand>
        <name>NAD(+)</name>
        <dbReference type="ChEBI" id="CHEBI:57540"/>
    </ligand>
</feature>
<feature type="binding site" evidence="1">
    <location>
        <position position="285"/>
    </location>
    <ligand>
        <name>NAD(+)</name>
        <dbReference type="ChEBI" id="CHEBI:57540"/>
    </ligand>
</feature>
<feature type="binding site" evidence="1">
    <location>
        <position position="309"/>
    </location>
    <ligand>
        <name>NAD(+)</name>
        <dbReference type="ChEBI" id="CHEBI:57540"/>
    </ligand>
</feature>
<feature type="binding site" evidence="1">
    <location>
        <position position="404"/>
    </location>
    <ligand>
        <name>Zn(2+)</name>
        <dbReference type="ChEBI" id="CHEBI:29105"/>
    </ligand>
</feature>
<feature type="binding site" evidence="1">
    <location>
        <position position="407"/>
    </location>
    <ligand>
        <name>Zn(2+)</name>
        <dbReference type="ChEBI" id="CHEBI:29105"/>
    </ligand>
</feature>
<feature type="binding site" evidence="1">
    <location>
        <position position="422"/>
    </location>
    <ligand>
        <name>Zn(2+)</name>
        <dbReference type="ChEBI" id="CHEBI:29105"/>
    </ligand>
</feature>
<feature type="binding site" evidence="1">
    <location>
        <position position="428"/>
    </location>
    <ligand>
        <name>Zn(2+)</name>
        <dbReference type="ChEBI" id="CHEBI:29105"/>
    </ligand>
</feature>
<comment type="function">
    <text evidence="1">DNA ligase that catalyzes the formation of phosphodiester linkages between 5'-phosphoryl and 3'-hydroxyl groups in double-stranded DNA using NAD as a coenzyme and as the energy source for the reaction. It is essential for DNA replication and repair of damaged DNA.</text>
</comment>
<comment type="catalytic activity">
    <reaction evidence="1">
        <text>NAD(+) + (deoxyribonucleotide)n-3'-hydroxyl + 5'-phospho-(deoxyribonucleotide)m = (deoxyribonucleotide)n+m + AMP + beta-nicotinamide D-nucleotide.</text>
        <dbReference type="EC" id="6.5.1.2"/>
    </reaction>
</comment>
<comment type="cofactor">
    <cofactor evidence="1">
        <name>Mg(2+)</name>
        <dbReference type="ChEBI" id="CHEBI:18420"/>
    </cofactor>
    <cofactor evidence="1">
        <name>Mn(2+)</name>
        <dbReference type="ChEBI" id="CHEBI:29035"/>
    </cofactor>
</comment>
<comment type="similarity">
    <text evidence="1">Belongs to the NAD-dependent DNA ligase family. LigA subfamily.</text>
</comment>
<reference key="1">
    <citation type="journal article" date="2003" name="Science">
        <title>A genomic view of the human-Bacteroides thetaiotaomicron symbiosis.</title>
        <authorList>
            <person name="Xu J."/>
            <person name="Bjursell M.K."/>
            <person name="Himrod J."/>
            <person name="Deng S."/>
            <person name="Carmichael L.K."/>
            <person name="Chiang H.C."/>
            <person name="Hooper L.V."/>
            <person name="Gordon J.I."/>
        </authorList>
    </citation>
    <scope>NUCLEOTIDE SEQUENCE [LARGE SCALE GENOMIC DNA]</scope>
    <source>
        <strain>ATCC 29148 / DSM 2079 / JCM 5827 / CCUG 10774 / NCTC 10582 / VPI-5482 / E50</strain>
    </source>
</reference>
<organism>
    <name type="scientific">Bacteroides thetaiotaomicron (strain ATCC 29148 / DSM 2079 / JCM 5827 / CCUG 10774 / NCTC 10582 / VPI-5482 / E50)</name>
    <dbReference type="NCBI Taxonomy" id="226186"/>
    <lineage>
        <taxon>Bacteria</taxon>
        <taxon>Pseudomonadati</taxon>
        <taxon>Bacteroidota</taxon>
        <taxon>Bacteroidia</taxon>
        <taxon>Bacteroidales</taxon>
        <taxon>Bacteroidaceae</taxon>
        <taxon>Bacteroides</taxon>
    </lineage>
</organism>
<gene>
    <name evidence="1" type="primary">ligA</name>
    <name type="ordered locus">BT_0894</name>
</gene>
<dbReference type="EC" id="6.5.1.2" evidence="1"/>
<dbReference type="EMBL" id="AE015928">
    <property type="protein sequence ID" value="AAO76001.1"/>
    <property type="molecule type" value="Genomic_DNA"/>
</dbReference>
<dbReference type="RefSeq" id="NP_809807.1">
    <property type="nucleotide sequence ID" value="NC_004663.1"/>
</dbReference>
<dbReference type="RefSeq" id="WP_008765723.1">
    <property type="nucleotide sequence ID" value="NC_004663.1"/>
</dbReference>
<dbReference type="SMR" id="Q8A9C1"/>
<dbReference type="FunCoup" id="Q8A9C1">
    <property type="interactions" value="397"/>
</dbReference>
<dbReference type="STRING" id="226186.BT_0894"/>
<dbReference type="PaxDb" id="226186-BT_0894"/>
<dbReference type="EnsemblBacteria" id="AAO76001">
    <property type="protein sequence ID" value="AAO76001"/>
    <property type="gene ID" value="BT_0894"/>
</dbReference>
<dbReference type="GeneID" id="60926864"/>
<dbReference type="KEGG" id="bth:BT_0894"/>
<dbReference type="PATRIC" id="fig|226186.12.peg.906"/>
<dbReference type="eggNOG" id="COG0272">
    <property type="taxonomic scope" value="Bacteria"/>
</dbReference>
<dbReference type="HOGENOM" id="CLU_007764_2_0_10"/>
<dbReference type="InParanoid" id="Q8A9C1"/>
<dbReference type="OrthoDB" id="9759736at2"/>
<dbReference type="Proteomes" id="UP000001414">
    <property type="component" value="Chromosome"/>
</dbReference>
<dbReference type="GO" id="GO:0005829">
    <property type="term" value="C:cytosol"/>
    <property type="evidence" value="ECO:0000318"/>
    <property type="project" value="GO_Central"/>
</dbReference>
<dbReference type="GO" id="GO:0003677">
    <property type="term" value="F:DNA binding"/>
    <property type="evidence" value="ECO:0007669"/>
    <property type="project" value="InterPro"/>
</dbReference>
<dbReference type="GO" id="GO:0003911">
    <property type="term" value="F:DNA ligase (NAD+) activity"/>
    <property type="evidence" value="ECO:0000318"/>
    <property type="project" value="GO_Central"/>
</dbReference>
<dbReference type="GO" id="GO:0046872">
    <property type="term" value="F:metal ion binding"/>
    <property type="evidence" value="ECO:0007669"/>
    <property type="project" value="UniProtKB-KW"/>
</dbReference>
<dbReference type="GO" id="GO:0006281">
    <property type="term" value="P:DNA repair"/>
    <property type="evidence" value="ECO:0007669"/>
    <property type="project" value="UniProtKB-KW"/>
</dbReference>
<dbReference type="GO" id="GO:0006260">
    <property type="term" value="P:DNA replication"/>
    <property type="evidence" value="ECO:0007669"/>
    <property type="project" value="UniProtKB-KW"/>
</dbReference>
<dbReference type="CDD" id="cd00114">
    <property type="entry name" value="LIGANc"/>
    <property type="match status" value="1"/>
</dbReference>
<dbReference type="FunFam" id="1.10.150.20:FF:000006">
    <property type="entry name" value="DNA ligase"/>
    <property type="match status" value="1"/>
</dbReference>
<dbReference type="FunFam" id="1.10.150.20:FF:000007">
    <property type="entry name" value="DNA ligase"/>
    <property type="match status" value="1"/>
</dbReference>
<dbReference type="FunFam" id="1.10.287.610:FF:000002">
    <property type="entry name" value="DNA ligase"/>
    <property type="match status" value="1"/>
</dbReference>
<dbReference type="FunFam" id="2.40.50.140:FF:000012">
    <property type="entry name" value="DNA ligase"/>
    <property type="match status" value="1"/>
</dbReference>
<dbReference type="FunFam" id="3.30.470.30:FF:000001">
    <property type="entry name" value="DNA ligase"/>
    <property type="match status" value="1"/>
</dbReference>
<dbReference type="FunFam" id="6.20.10.30:FF:000005">
    <property type="entry name" value="DNA ligase"/>
    <property type="match status" value="1"/>
</dbReference>
<dbReference type="Gene3D" id="6.20.10.30">
    <property type="match status" value="1"/>
</dbReference>
<dbReference type="Gene3D" id="1.10.150.20">
    <property type="entry name" value="5' to 3' exonuclease, C-terminal subdomain"/>
    <property type="match status" value="2"/>
</dbReference>
<dbReference type="Gene3D" id="3.40.50.10190">
    <property type="entry name" value="BRCT domain"/>
    <property type="match status" value="1"/>
</dbReference>
<dbReference type="Gene3D" id="3.30.470.30">
    <property type="entry name" value="DNA ligase/mRNA capping enzyme"/>
    <property type="match status" value="1"/>
</dbReference>
<dbReference type="Gene3D" id="1.10.287.610">
    <property type="entry name" value="Helix hairpin bin"/>
    <property type="match status" value="1"/>
</dbReference>
<dbReference type="Gene3D" id="2.40.50.140">
    <property type="entry name" value="Nucleic acid-binding proteins"/>
    <property type="match status" value="1"/>
</dbReference>
<dbReference type="HAMAP" id="MF_01588">
    <property type="entry name" value="DNA_ligase_A"/>
    <property type="match status" value="1"/>
</dbReference>
<dbReference type="InterPro" id="IPR001357">
    <property type="entry name" value="BRCT_dom"/>
</dbReference>
<dbReference type="InterPro" id="IPR036420">
    <property type="entry name" value="BRCT_dom_sf"/>
</dbReference>
<dbReference type="InterPro" id="IPR041663">
    <property type="entry name" value="DisA/LigA_HHH"/>
</dbReference>
<dbReference type="InterPro" id="IPR001679">
    <property type="entry name" value="DNA_ligase"/>
</dbReference>
<dbReference type="InterPro" id="IPR013839">
    <property type="entry name" value="DNAligase_adenylation"/>
</dbReference>
<dbReference type="InterPro" id="IPR013840">
    <property type="entry name" value="DNAligase_N"/>
</dbReference>
<dbReference type="InterPro" id="IPR003583">
    <property type="entry name" value="Hlx-hairpin-Hlx_DNA-bd_motif"/>
</dbReference>
<dbReference type="InterPro" id="IPR012340">
    <property type="entry name" value="NA-bd_OB-fold"/>
</dbReference>
<dbReference type="InterPro" id="IPR004150">
    <property type="entry name" value="NAD_DNA_ligase_OB"/>
</dbReference>
<dbReference type="InterPro" id="IPR010994">
    <property type="entry name" value="RuvA_2-like"/>
</dbReference>
<dbReference type="InterPro" id="IPR004149">
    <property type="entry name" value="Znf_DNAligase_C4"/>
</dbReference>
<dbReference type="NCBIfam" id="TIGR00575">
    <property type="entry name" value="dnlj"/>
    <property type="match status" value="1"/>
</dbReference>
<dbReference type="NCBIfam" id="NF005932">
    <property type="entry name" value="PRK07956.1"/>
    <property type="match status" value="1"/>
</dbReference>
<dbReference type="PANTHER" id="PTHR23389">
    <property type="entry name" value="CHROMOSOME TRANSMISSION FIDELITY FACTOR 18"/>
    <property type="match status" value="1"/>
</dbReference>
<dbReference type="PANTHER" id="PTHR23389:SF9">
    <property type="entry name" value="DNA LIGASE"/>
    <property type="match status" value="1"/>
</dbReference>
<dbReference type="Pfam" id="PF00533">
    <property type="entry name" value="BRCT"/>
    <property type="match status" value="1"/>
</dbReference>
<dbReference type="Pfam" id="PF01653">
    <property type="entry name" value="DNA_ligase_aden"/>
    <property type="match status" value="1"/>
</dbReference>
<dbReference type="Pfam" id="PF03120">
    <property type="entry name" value="DNA_ligase_OB"/>
    <property type="match status" value="1"/>
</dbReference>
<dbReference type="Pfam" id="PF03119">
    <property type="entry name" value="DNA_ligase_ZBD"/>
    <property type="match status" value="1"/>
</dbReference>
<dbReference type="Pfam" id="PF12826">
    <property type="entry name" value="HHH_2"/>
    <property type="match status" value="1"/>
</dbReference>
<dbReference type="Pfam" id="PF14520">
    <property type="entry name" value="HHH_5"/>
    <property type="match status" value="1"/>
</dbReference>
<dbReference type="Pfam" id="PF22745">
    <property type="entry name" value="Nlig-Ia"/>
    <property type="match status" value="1"/>
</dbReference>
<dbReference type="PIRSF" id="PIRSF001604">
    <property type="entry name" value="LigA"/>
    <property type="match status" value="1"/>
</dbReference>
<dbReference type="SMART" id="SM00292">
    <property type="entry name" value="BRCT"/>
    <property type="match status" value="1"/>
</dbReference>
<dbReference type="SMART" id="SM00278">
    <property type="entry name" value="HhH1"/>
    <property type="match status" value="4"/>
</dbReference>
<dbReference type="SMART" id="SM00532">
    <property type="entry name" value="LIGANc"/>
    <property type="match status" value="1"/>
</dbReference>
<dbReference type="SUPFAM" id="SSF52113">
    <property type="entry name" value="BRCT domain"/>
    <property type="match status" value="1"/>
</dbReference>
<dbReference type="SUPFAM" id="SSF56091">
    <property type="entry name" value="DNA ligase/mRNA capping enzyme, catalytic domain"/>
    <property type="match status" value="1"/>
</dbReference>
<dbReference type="SUPFAM" id="SSF50249">
    <property type="entry name" value="Nucleic acid-binding proteins"/>
    <property type="match status" value="1"/>
</dbReference>
<dbReference type="SUPFAM" id="SSF47781">
    <property type="entry name" value="RuvA domain 2-like"/>
    <property type="match status" value="1"/>
</dbReference>
<dbReference type="PROSITE" id="PS50172">
    <property type="entry name" value="BRCT"/>
    <property type="match status" value="1"/>
</dbReference>
<evidence type="ECO:0000255" key="1">
    <source>
        <dbReference type="HAMAP-Rule" id="MF_01588"/>
    </source>
</evidence>
<keyword id="KW-0227">DNA damage</keyword>
<keyword id="KW-0234">DNA repair</keyword>
<keyword id="KW-0235">DNA replication</keyword>
<keyword id="KW-0436">Ligase</keyword>
<keyword id="KW-0460">Magnesium</keyword>
<keyword id="KW-0464">Manganese</keyword>
<keyword id="KW-0479">Metal-binding</keyword>
<keyword id="KW-0520">NAD</keyword>
<keyword id="KW-1185">Reference proteome</keyword>
<keyword id="KW-0862">Zinc</keyword>
<accession>Q8A9C1</accession>
<sequence length="666" mass="75133">MDIKEKIEELRAELHRHNYNYYVLNAPEISDKEFDDKMRELQDLELAHPEYKDENSPTMRVGSDINKNFTQVAHKYPMLSLANTYSEGEVTDFYERVRKALNEDFEICCEMKYDGTSISLTYEDGKLVRAVTRGDGEKGDDVTDNVKTIRSIPLVLHGDNYPSSFEIRGEILMPWEVFEELNREKEAREEPLFANPRNAASGTLKLQNSSIVASRKLDAYLYYLLGDNLPCDGHYENLQEAAKWGFKISDLTRKCQTLEEVFEFINYWDVERKNLPVATDGIVLKVNSLRQQKNLGFTAKSPRWAIAYKFQAERALTRLNMVTYQVGRTGAVTPVANLDAVQLSGTVVKRASLHNADIIEGLDLHIGDMVYVEKGGEIIPKITGVDKDARSFMLGEKVRFITNCPECGSKLIRYEGEAAHYCPNETACPPQIKGKIEHFISRKAMNIDGLGPETVDMFYRLGLIHNTADLYELKADDIKGLDRMGEKSAENIITGIEQSKTVPFERVIFALGIRFVGETVAKKIAKSFGDIDELRQADLEKLISIDEIGEKIARSILLYFSNESNRELVGRLKEAGLQLYRTEEDMSGYTDKLAGQSIVISGVFTHHSRDEYKDLIEKNGGKNVGSISAKTSFILAGDNMGPAKLEKAKKLGVTILSEDEFLKLIS</sequence>
<protein>
    <recommendedName>
        <fullName evidence="1">DNA ligase</fullName>
        <ecNumber evidence="1">6.5.1.2</ecNumber>
    </recommendedName>
    <alternativeName>
        <fullName evidence="1">Polydeoxyribonucleotide synthase [NAD(+)]</fullName>
    </alternativeName>
</protein>